<accession>P01115</accession>
<accession>O40604</accession>
<sequence length="241" mass="26328">MPAARAAPAADEPMRDPVAPVRAPALPRPAPGAVAPASGGARAPGLAAPVEAMTEYKLVVVGARGVGKSALTIQLIQNHFVDEYDPTIEDSYRKQVVIDGETCLLDILDTTGQEEYSAMRDQYMRTGEGFLCVFAINNTKSFEDIHQYREQIKRVKDSDDVPMVLVGNKCDLAGRTVESRQAQDLARSYGIPYIETSAKTRQGVEDAFYTLVREIRQHKLRKLNPPDESGPGCMSCKCVLS</sequence>
<organismHost>
    <name type="scientific">Mus musculus</name>
    <name type="common">Mouse</name>
    <dbReference type="NCBI Taxonomy" id="10090"/>
</organismHost>
<name>RASH_MSVHA</name>
<keyword id="KW-0342">GTP-binding</keyword>
<keyword id="KW-1032">Host cell membrane</keyword>
<keyword id="KW-1043">Host membrane</keyword>
<keyword id="KW-0378">Hydrolase</keyword>
<keyword id="KW-0449">Lipoprotein</keyword>
<keyword id="KW-0472">Membrane</keyword>
<keyword id="KW-0488">Methylation</keyword>
<keyword id="KW-0547">Nucleotide-binding</keyword>
<keyword id="KW-0553">Oncogene</keyword>
<keyword id="KW-0564">Palmitate</keyword>
<keyword id="KW-0636">Prenylation</keyword>
<protein>
    <recommendedName>
        <fullName>Transforming protein p29</fullName>
        <ecNumber evidence="1">3.6.5.2</ecNumber>
    </recommendedName>
    <component>
        <recommendedName>
            <fullName>Transforming protein p21</fullName>
        </recommendedName>
    </component>
</protein>
<organism>
    <name type="scientific">Harvey murine sarcoma virus</name>
    <dbReference type="NCBI Taxonomy" id="11807"/>
    <lineage>
        <taxon>Viruses</taxon>
        <taxon>Riboviria</taxon>
        <taxon>Pararnavirae</taxon>
        <taxon>Artverviricota</taxon>
        <taxon>Revtraviricetes</taxon>
        <taxon>Ortervirales</taxon>
        <taxon>Retroviridae</taxon>
        <taxon>Orthoretrovirinae</taxon>
        <taxon>Gammaretrovirus</taxon>
    </lineage>
</organism>
<gene>
    <name type="primary">H-RAS</name>
</gene>
<evidence type="ECO:0000250" key="1">
    <source>
        <dbReference type="UniProtKB" id="P01112"/>
    </source>
</evidence>
<evidence type="ECO:0000255" key="2"/>
<evidence type="ECO:0000256" key="3">
    <source>
        <dbReference type="SAM" id="MobiDB-lite"/>
    </source>
</evidence>
<evidence type="ECO:0000305" key="4"/>
<feature type="chain" id="PRO_0000030183" description="Transforming protein p29">
    <location>
        <begin position="1"/>
        <end position="238"/>
    </location>
</feature>
<feature type="chain" id="PRO_0000030184" description="Transforming protein p21">
    <location>
        <begin position="53"/>
        <end position="238"/>
    </location>
</feature>
<feature type="propeptide" id="PRO_0000030185" description="Removed in mature form" evidence="4">
    <location>
        <begin position="239"/>
        <end position="241"/>
    </location>
</feature>
<feature type="region of interest" description="Disordered" evidence="3">
    <location>
        <begin position="1"/>
        <end position="41"/>
    </location>
</feature>
<feature type="modified residue" description="Cysteine methyl ester; by host" evidence="4">
    <location>
        <position position="238"/>
    </location>
</feature>
<feature type="lipid moiety-binding region" description="S-palmitoyl cysteine; by host" evidence="2">
    <location>
        <position position="233"/>
    </location>
</feature>
<feature type="lipid moiety-binding region" description="S-palmitoyl cysteine; by host" evidence="2">
    <location>
        <position position="236"/>
    </location>
</feature>
<feature type="lipid moiety-binding region" description="S-farnesyl cysteine; by host" evidence="2">
    <location>
        <position position="238"/>
    </location>
</feature>
<feature type="sequence conflict" description="In Ref. 2; CAA25322." evidence="4" ref="2">
    <original>G</original>
    <variation>A</variation>
    <location>
        <position position="174"/>
    </location>
</feature>
<proteinExistence type="evidence at protein level"/>
<reference key="1">
    <citation type="journal article" date="1982" name="Science">
        <title>Nucleotide sequence of the p21 transforming protein of Harvey murine sarcoma virus.</title>
        <authorList>
            <person name="Dhar R."/>
            <person name="Ellis R.W."/>
            <person name="Shih T.Y."/>
            <person name="Oroszlan S."/>
            <person name="Shapiro B."/>
            <person name="Maizel J."/>
            <person name="Lowy D."/>
            <person name="Scolnick E."/>
        </authorList>
    </citation>
    <scope>NUCLEOTIDE SEQUENCE</scope>
</reference>
<reference key="2">
    <citation type="journal article" date="1984" name="Nucleic Acids Res.">
        <title>An altered DNA sequence encompassing the ras gene of Harvey murine sarcoma virus.</title>
        <authorList>
            <person name="Yasuda S."/>
            <person name="Furuichi M."/>
            <person name="Soeda E."/>
        </authorList>
    </citation>
    <scope>NUCLEOTIDE SEQUENCE [GENOMIC DNA]</scope>
</reference>
<reference key="3">
    <citation type="journal article" date="1987" name="Annu. Rev. Biochem.">
        <title>Ras genes.</title>
        <authorList>
            <person name="Barbacid M."/>
        </authorList>
    </citation>
    <scope>REVIEW</scope>
</reference>
<reference key="4">
    <citation type="journal article" date="1980" name="Cell">
        <title>Localization of the src gene product of the Harvey strain of MSV to plasma membrane of transformed cells by electron microscopic immunocytochemistry.</title>
        <authorList>
            <person name="Willingham M.C."/>
            <person name="Pastan I."/>
            <person name="Shih T.Y."/>
            <person name="Scolnick E.M."/>
        </authorList>
    </citation>
    <scope>CHARACTERIZATION</scope>
</reference>
<comment type="catalytic activity">
    <reaction evidence="1">
        <text>GTP + H2O = GDP + phosphate + H(+)</text>
        <dbReference type="Rhea" id="RHEA:19669"/>
        <dbReference type="ChEBI" id="CHEBI:15377"/>
        <dbReference type="ChEBI" id="CHEBI:15378"/>
        <dbReference type="ChEBI" id="CHEBI:37565"/>
        <dbReference type="ChEBI" id="CHEBI:43474"/>
        <dbReference type="ChEBI" id="CHEBI:58189"/>
        <dbReference type="EC" id="3.6.5.2"/>
    </reaction>
</comment>
<comment type="activity regulation">
    <text>Alternates between an inactive form bound to GDP and an active form bound to GTP. Activated by a guanine nucleotide-exchange factor (GEF) and inactivated by a GTPase-activating protein (GAP).</text>
</comment>
<comment type="subcellular location">
    <subcellularLocation>
        <location>Host cell membrane</location>
        <topology>Lipid-anchor</topology>
        <orientation>Cytoplasmic side</orientation>
    </subcellularLocation>
    <text>Inner surface of plasma membrane.</text>
</comment>
<comment type="miscellaneous">
    <text>This p21 transforming protein was generated by a transduction of rodent cellular H-ras-1 gene.</text>
</comment>
<comment type="similarity">
    <text evidence="4">Belongs to the small GTPase superfamily. Ras family.</text>
</comment>
<comment type="sequence caution" evidence="4">
    <conflict type="erroneous initiation">
        <sequence resource="EMBL-CDS" id="AAA46570"/>
    </conflict>
</comment>
<comment type="sequence caution" evidence="4">
    <conflict type="erroneous initiation">
        <sequence resource="EMBL-CDS" id="CAA25322"/>
    </conflict>
</comment>
<dbReference type="EC" id="3.6.5.2" evidence="1"/>
<dbReference type="EMBL" id="X00740">
    <property type="protein sequence ID" value="CAA25322.1"/>
    <property type="status" value="ALT_INIT"/>
    <property type="molecule type" value="Genomic_DNA"/>
</dbReference>
<dbReference type="EMBL" id="J02207">
    <property type="protein sequence ID" value="AAA46569.1"/>
    <property type="molecule type" value="Genomic_RNA"/>
</dbReference>
<dbReference type="EMBL" id="J02207">
    <property type="protein sequence ID" value="AAA46570.1"/>
    <property type="status" value="ALT_INIT"/>
    <property type="molecule type" value="Genomic_RNA"/>
</dbReference>
<dbReference type="EMBL" id="M24154">
    <property type="protein sequence ID" value="AAA46568.1"/>
    <property type="molecule type" value="Genomic_RNA"/>
</dbReference>
<dbReference type="PIR" id="A01363">
    <property type="entry name" value="TVMV3H"/>
</dbReference>
<dbReference type="BMRB" id="P01115"/>
<dbReference type="SMR" id="P01115"/>
<dbReference type="SwissPalm" id="P01115"/>
<dbReference type="OrthoDB" id="41656at10239"/>
<dbReference type="Proteomes" id="UP000232675">
    <property type="component" value="Genome"/>
</dbReference>
<dbReference type="GO" id="GO:0020002">
    <property type="term" value="C:host cell plasma membrane"/>
    <property type="evidence" value="ECO:0007669"/>
    <property type="project" value="UniProtKB-SubCell"/>
</dbReference>
<dbReference type="GO" id="GO:0016020">
    <property type="term" value="C:membrane"/>
    <property type="evidence" value="ECO:0007669"/>
    <property type="project" value="UniProtKB-KW"/>
</dbReference>
<dbReference type="GO" id="GO:0003925">
    <property type="term" value="F:G protein activity"/>
    <property type="evidence" value="ECO:0007669"/>
    <property type="project" value="UniProtKB-EC"/>
</dbReference>
<dbReference type="GO" id="GO:0005525">
    <property type="term" value="F:GTP binding"/>
    <property type="evidence" value="ECO:0007669"/>
    <property type="project" value="UniProtKB-KW"/>
</dbReference>
<dbReference type="GO" id="GO:0007165">
    <property type="term" value="P:signal transduction"/>
    <property type="evidence" value="ECO:0007669"/>
    <property type="project" value="InterPro"/>
</dbReference>
<dbReference type="CDD" id="cd04138">
    <property type="entry name" value="H_N_K_Ras_like"/>
    <property type="match status" value="1"/>
</dbReference>
<dbReference type="FunFam" id="3.40.50.300:FF:000096">
    <property type="entry name" value="KRAS proto-oncogene, GTPase"/>
    <property type="match status" value="1"/>
</dbReference>
<dbReference type="Gene3D" id="3.40.50.300">
    <property type="entry name" value="P-loop containing nucleotide triphosphate hydrolases"/>
    <property type="match status" value="1"/>
</dbReference>
<dbReference type="InterPro" id="IPR027417">
    <property type="entry name" value="P-loop_NTPase"/>
</dbReference>
<dbReference type="InterPro" id="IPR005225">
    <property type="entry name" value="Small_GTP-bd"/>
</dbReference>
<dbReference type="InterPro" id="IPR001806">
    <property type="entry name" value="Small_GTPase"/>
</dbReference>
<dbReference type="InterPro" id="IPR020849">
    <property type="entry name" value="Small_GTPase_Ras-type"/>
</dbReference>
<dbReference type="NCBIfam" id="TIGR00231">
    <property type="entry name" value="small_GTP"/>
    <property type="match status" value="1"/>
</dbReference>
<dbReference type="PANTHER" id="PTHR24070">
    <property type="entry name" value="RAS, DI-RAS, AND RHEB FAMILY MEMBERS OF SMALL GTPASE SUPERFAMILY"/>
    <property type="match status" value="1"/>
</dbReference>
<dbReference type="Pfam" id="PF00071">
    <property type="entry name" value="Ras"/>
    <property type="match status" value="1"/>
</dbReference>
<dbReference type="PRINTS" id="PR00449">
    <property type="entry name" value="RASTRNSFRMNG"/>
</dbReference>
<dbReference type="SMART" id="SM00175">
    <property type="entry name" value="RAB"/>
    <property type="match status" value="1"/>
</dbReference>
<dbReference type="SMART" id="SM00173">
    <property type="entry name" value="RAS"/>
    <property type="match status" value="1"/>
</dbReference>
<dbReference type="SMART" id="SM00174">
    <property type="entry name" value="RHO"/>
    <property type="match status" value="1"/>
</dbReference>
<dbReference type="SUPFAM" id="SSF52540">
    <property type="entry name" value="P-loop containing nucleoside triphosphate hydrolases"/>
    <property type="match status" value="1"/>
</dbReference>
<dbReference type="PROSITE" id="PS51421">
    <property type="entry name" value="RAS"/>
    <property type="match status" value="1"/>
</dbReference>